<accession>Q8DN89</accession>
<reference evidence="7" key="1">
    <citation type="journal article" date="2001" name="J. Bacteriol.">
        <title>Genome of the bacterium Streptococcus pneumoniae strain R6.</title>
        <authorList>
            <person name="Hoskins J."/>
            <person name="Alborn W.E. Jr."/>
            <person name="Arnold J."/>
            <person name="Blaszczak L.C."/>
            <person name="Burgett S."/>
            <person name="DeHoff B.S."/>
            <person name="Estrem S.T."/>
            <person name="Fritz L."/>
            <person name="Fu D.-J."/>
            <person name="Fuller W."/>
            <person name="Geringer C."/>
            <person name="Gilmour R."/>
            <person name="Glass J.S."/>
            <person name="Khoja H."/>
            <person name="Kraft A.R."/>
            <person name="Lagace R.E."/>
            <person name="LeBlanc D.J."/>
            <person name="Lee L.N."/>
            <person name="Lefkowitz E.J."/>
            <person name="Lu J."/>
            <person name="Matsushima P."/>
            <person name="McAhren S.M."/>
            <person name="McHenney M."/>
            <person name="McLeaster K."/>
            <person name="Mundy C.W."/>
            <person name="Nicas T.I."/>
            <person name="Norris F.H."/>
            <person name="O'Gara M."/>
            <person name="Peery R.B."/>
            <person name="Robertson G.T."/>
            <person name="Rockey P."/>
            <person name="Sun P.-M."/>
            <person name="Winkler M.E."/>
            <person name="Yang Y."/>
            <person name="Young-Bellido M."/>
            <person name="Zhao G."/>
            <person name="Zook C.A."/>
            <person name="Baltz R.H."/>
            <person name="Jaskunas S.R."/>
            <person name="Rosteck P.R. Jr."/>
            <person name="Skatrud P.L."/>
            <person name="Glass J.I."/>
        </authorList>
    </citation>
    <scope>NUCLEOTIDE SEQUENCE [LARGE SCALE GENOMIC DNA]</scope>
    <source>
        <strain evidence="7">ATCC BAA-255 / R6</strain>
    </source>
</reference>
<reference evidence="5" key="2">
    <citation type="journal article" date="2021" name="Front. Cell. Infect. Microbiol.">
        <title>The Role of Minor Pilins in Assembly and Function of the Competence Pilus of Streptococcus pneumoniae.</title>
        <authorList>
            <person name="Oliveira V."/>
            <person name="Aschtgen M.S."/>
            <person name="van Erp A."/>
            <person name="Henriques-Normark B."/>
            <person name="Muschiol S."/>
        </authorList>
    </citation>
    <scope>FUNCTION</scope>
    <scope>INTERACTION WITH COMGE; COMGF AND COMGG</scope>
    <scope>SUBCELLULAR LOCATION</scope>
    <scope>MUTAGENESIS OF GLU-35</scope>
</reference>
<gene>
    <name evidence="4" type="primary">comGD</name>
    <name evidence="6" type="synonym">cglD</name>
    <name evidence="6" type="ordered locus">spr1861</name>
</gene>
<comment type="function">
    <text evidence="1 3 5">Required for formation of the type IV-like pilus (T4P) that plays a role in transformation (PubMed:35004361). Transformation pili are dynamically extended and retracted, perhaps thereby promoting DNA uptake and transformation (Probable). Involved in transformation (PubMed:35004361). Required for DNA binding (By similarity).</text>
</comment>
<comment type="subunit">
    <text evidence="3">The transformation pili are flexible filaments, consisting mainly of the major pilin ComGC and smaller amounts of the minor pilins, including at least ComGD, ComGF and ComGG, and perhaps ComGE (PubMed:35004361). Interacts with ComGE (PubMed:35004361). Interacts with ComGF (PubMed:35004361). Interacts with ComGG (PubMed:35004361).</text>
</comment>
<comment type="subcellular location">
    <subcellularLocation>
        <location evidence="1">Cell membrane</location>
        <topology evidence="1">Single-pass membrane protein</topology>
    </subcellularLocation>
    <subcellularLocation>
        <location evidence="1">Cell surface</location>
    </subcellularLocation>
    <subcellularLocation>
        <location evidence="3">Fimbrium</location>
    </subcellularLocation>
    <text evidence="1">The unprocessed form is an integral membrane protein. Upon cleavage, it is translocated to the outer face of the membrane.</text>
</comment>
<comment type="induction">
    <text evidence="3">Part of the putative comGA-comGB-comGC-comGD-comGE-comGF-comGG operon.</text>
</comment>
<sequence>MDASRKNRLKLIKNTMIKMEEQIVKSMIKAFTMLESLLVLGLVSILALGLSGSVQSTFSAVEEQIFFMEFEELYRETQKRSVASQQKTSLNLDGQMISNGSQKLTVPKGIQAPSGQSITFDRAGGNSSLAKVEFQTSKGAIRYQLYLGNGKIKRIKETKN</sequence>
<proteinExistence type="evidence at protein level"/>
<organism evidence="6 7">
    <name type="scientific">Streptococcus pneumoniae (strain ATCC BAA-255 / R6)</name>
    <dbReference type="NCBI Taxonomy" id="171101"/>
    <lineage>
        <taxon>Bacteria</taxon>
        <taxon>Bacillati</taxon>
        <taxon>Bacillota</taxon>
        <taxon>Bacilli</taxon>
        <taxon>Lactobacillales</taxon>
        <taxon>Streptococcaceae</taxon>
        <taxon>Streptococcus</taxon>
    </lineage>
</organism>
<evidence type="ECO:0000250" key="1">
    <source>
        <dbReference type="UniProtKB" id="P25956"/>
    </source>
</evidence>
<evidence type="ECO:0000255" key="2"/>
<evidence type="ECO:0000269" key="3">
    <source>
    </source>
</evidence>
<evidence type="ECO:0000303" key="4">
    <source>
    </source>
</evidence>
<evidence type="ECO:0000305" key="5"/>
<evidence type="ECO:0000312" key="6">
    <source>
        <dbReference type="EMBL" id="AAL00663.1"/>
    </source>
</evidence>
<evidence type="ECO:0000312" key="7">
    <source>
        <dbReference type="Proteomes" id="UP000000586"/>
    </source>
</evidence>
<feature type="chain" id="PRO_0000459511" description="Competence protein ComGD">
    <location>
        <begin position="1"/>
        <end position="160"/>
    </location>
</feature>
<feature type="transmembrane region" description="Helical" evidence="2">
    <location>
        <begin position="30"/>
        <end position="50"/>
    </location>
</feature>
<feature type="mutagenesis site" description="Reduces detection of ComGC in the mechanically-sheared fraction, probably corresponding to the pilus. Reduces transformation." evidence="3">
    <original>E</original>
    <variation>A</variation>
    <location>
        <position position="35"/>
    </location>
</feature>
<dbReference type="EMBL" id="AE007317">
    <property type="protein sequence ID" value="AAL00663.1"/>
    <property type="molecule type" value="Genomic_DNA"/>
</dbReference>
<dbReference type="PIR" id="B98104">
    <property type="entry name" value="B98104"/>
</dbReference>
<dbReference type="RefSeq" id="NP_359452.1">
    <property type="nucleotide sequence ID" value="NC_003098.1"/>
</dbReference>
<dbReference type="SMR" id="Q8DN89"/>
<dbReference type="STRING" id="171101.spr1861"/>
<dbReference type="KEGG" id="spr:spr1861"/>
<dbReference type="PATRIC" id="fig|171101.6.peg.2008"/>
<dbReference type="eggNOG" id="ENOG5033A38">
    <property type="taxonomic scope" value="Bacteria"/>
</dbReference>
<dbReference type="HOGENOM" id="CLU_144737_0_0_9"/>
<dbReference type="Proteomes" id="UP000000586">
    <property type="component" value="Chromosome"/>
</dbReference>
<dbReference type="GO" id="GO:0009986">
    <property type="term" value="C:cell surface"/>
    <property type="evidence" value="ECO:0007669"/>
    <property type="project" value="UniProtKB-SubCell"/>
</dbReference>
<dbReference type="GO" id="GO:0009289">
    <property type="term" value="C:pilus"/>
    <property type="evidence" value="ECO:0007669"/>
    <property type="project" value="UniProtKB-SubCell"/>
</dbReference>
<dbReference type="GO" id="GO:0005886">
    <property type="term" value="C:plasma membrane"/>
    <property type="evidence" value="ECO:0007669"/>
    <property type="project" value="UniProtKB-SubCell"/>
</dbReference>
<dbReference type="GO" id="GO:0030420">
    <property type="term" value="P:establishment of competence for transformation"/>
    <property type="evidence" value="ECO:0007669"/>
    <property type="project" value="UniProtKB-KW"/>
</dbReference>
<dbReference type="NCBIfam" id="NF040982">
    <property type="entry name" value="ComGD"/>
    <property type="match status" value="1"/>
</dbReference>
<keyword id="KW-1003">Cell membrane</keyword>
<keyword id="KW-0178">Competence</keyword>
<keyword id="KW-0281">Fimbrium</keyword>
<keyword id="KW-0472">Membrane</keyword>
<keyword id="KW-1185">Reference proteome</keyword>
<keyword id="KW-0812">Transmembrane</keyword>
<keyword id="KW-1133">Transmembrane helix</keyword>
<name>COMGD_STRR6</name>
<protein>
    <recommendedName>
        <fullName evidence="5">Competence protein ComGD</fullName>
    </recommendedName>
    <alternativeName>
        <fullName evidence="4">Minor pilin ComGD</fullName>
    </alternativeName>
</protein>